<gene>
    <name evidence="1" type="primary">rnz</name>
    <name type="ordered locus">MmarC6_1749</name>
</gene>
<evidence type="ECO:0000255" key="1">
    <source>
        <dbReference type="HAMAP-Rule" id="MF_01818"/>
    </source>
</evidence>
<feature type="chain" id="PRO_1000187971" description="Ribonuclease Z">
    <location>
        <begin position="1"/>
        <end position="308"/>
    </location>
</feature>
<feature type="active site" description="Proton acceptor" evidence="1">
    <location>
        <position position="64"/>
    </location>
</feature>
<feature type="binding site" evidence="1">
    <location>
        <position position="60"/>
    </location>
    <ligand>
        <name>Zn(2+)</name>
        <dbReference type="ChEBI" id="CHEBI:29105"/>
        <label>1</label>
        <note>catalytic</note>
    </ligand>
</feature>
<feature type="binding site" evidence="1">
    <location>
        <position position="62"/>
    </location>
    <ligand>
        <name>Zn(2+)</name>
        <dbReference type="ChEBI" id="CHEBI:29105"/>
        <label>1</label>
        <note>catalytic</note>
    </ligand>
</feature>
<feature type="binding site" evidence="1">
    <location>
        <position position="64"/>
    </location>
    <ligand>
        <name>Zn(2+)</name>
        <dbReference type="ChEBI" id="CHEBI:29105"/>
        <label>2</label>
        <note>catalytic</note>
    </ligand>
</feature>
<feature type="binding site" evidence="1">
    <location>
        <position position="65"/>
    </location>
    <ligand>
        <name>Zn(2+)</name>
        <dbReference type="ChEBI" id="CHEBI:29105"/>
        <label>2</label>
        <note>catalytic</note>
    </ligand>
</feature>
<feature type="binding site" evidence="1">
    <location>
        <position position="140"/>
    </location>
    <ligand>
        <name>Zn(2+)</name>
        <dbReference type="ChEBI" id="CHEBI:29105"/>
        <label>1</label>
        <note>catalytic</note>
    </ligand>
</feature>
<feature type="binding site" evidence="1">
    <location>
        <position position="209"/>
    </location>
    <ligand>
        <name>Zn(2+)</name>
        <dbReference type="ChEBI" id="CHEBI:29105"/>
        <label>1</label>
        <note>catalytic</note>
    </ligand>
</feature>
<feature type="binding site" evidence="1">
    <location>
        <position position="209"/>
    </location>
    <ligand>
        <name>Zn(2+)</name>
        <dbReference type="ChEBI" id="CHEBI:29105"/>
        <label>2</label>
        <note>catalytic</note>
    </ligand>
</feature>
<feature type="binding site" evidence="1">
    <location>
        <position position="269"/>
    </location>
    <ligand>
        <name>Zn(2+)</name>
        <dbReference type="ChEBI" id="CHEBI:29105"/>
        <label>2</label>
        <note>catalytic</note>
    </ligand>
</feature>
<comment type="function">
    <text evidence="1">Zinc phosphodiesterase, which displays some tRNA 3'-processing endonuclease activity. Probably involved in tRNA maturation, by removing a 3'-trailer from precursor tRNA.</text>
</comment>
<comment type="catalytic activity">
    <reaction evidence="1">
        <text>Endonucleolytic cleavage of RNA, removing extra 3' nucleotides from tRNA precursor, generating 3' termini of tRNAs. A 3'-hydroxy group is left at the tRNA terminus and a 5'-phosphoryl group is left at the trailer molecule.</text>
        <dbReference type="EC" id="3.1.26.11"/>
    </reaction>
</comment>
<comment type="cofactor">
    <cofactor evidence="1">
        <name>Zn(2+)</name>
        <dbReference type="ChEBI" id="CHEBI:29105"/>
    </cofactor>
    <text evidence="1">Binds 2 Zn(2+) ions.</text>
</comment>
<comment type="subunit">
    <text evidence="1">Homodimer.</text>
</comment>
<comment type="similarity">
    <text evidence="1">Belongs to the RNase Z family.</text>
</comment>
<protein>
    <recommendedName>
        <fullName evidence="1">Ribonuclease Z</fullName>
        <shortName evidence="1">RNase Z</shortName>
        <ecNumber evidence="1">3.1.26.11</ecNumber>
    </recommendedName>
    <alternativeName>
        <fullName evidence="1">tRNA 3 endonuclease</fullName>
    </alternativeName>
    <alternativeName>
        <fullName evidence="1">tRNase Z</fullName>
    </alternativeName>
</protein>
<organism>
    <name type="scientific">Methanococcus maripaludis (strain C6 / ATCC BAA-1332)</name>
    <dbReference type="NCBI Taxonomy" id="444158"/>
    <lineage>
        <taxon>Archaea</taxon>
        <taxon>Methanobacteriati</taxon>
        <taxon>Methanobacteriota</taxon>
        <taxon>Methanomada group</taxon>
        <taxon>Methanococci</taxon>
        <taxon>Methanococcales</taxon>
        <taxon>Methanococcaceae</taxon>
        <taxon>Methanococcus</taxon>
    </lineage>
</organism>
<proteinExistence type="inferred from homology"/>
<reference key="1">
    <citation type="submission" date="2007-10" db="EMBL/GenBank/DDBJ databases">
        <title>Complete sequence of Methanococcus maripaludis C6.</title>
        <authorList>
            <consortium name="US DOE Joint Genome Institute"/>
            <person name="Copeland A."/>
            <person name="Lucas S."/>
            <person name="Lapidus A."/>
            <person name="Barry K."/>
            <person name="Glavina del Rio T."/>
            <person name="Dalin E."/>
            <person name="Tice H."/>
            <person name="Pitluck S."/>
            <person name="Clum A."/>
            <person name="Schmutz J."/>
            <person name="Larimer F."/>
            <person name="Land M."/>
            <person name="Hauser L."/>
            <person name="Kyrpides N."/>
            <person name="Mikhailova N."/>
            <person name="Sieprawska-Lupa M."/>
            <person name="Whitman W.B."/>
            <person name="Richardson P."/>
        </authorList>
    </citation>
    <scope>NUCLEOTIDE SEQUENCE [LARGE SCALE GENOMIC DNA]</scope>
    <source>
        <strain>C6 / ATCC BAA-1332</strain>
    </source>
</reference>
<accession>A9AB37</accession>
<name>RNZ_METM6</name>
<keyword id="KW-0255">Endonuclease</keyword>
<keyword id="KW-0378">Hydrolase</keyword>
<keyword id="KW-0479">Metal-binding</keyword>
<keyword id="KW-0540">Nuclease</keyword>
<keyword id="KW-0819">tRNA processing</keyword>
<keyword id="KW-0862">Zinc</keyword>
<dbReference type="EC" id="3.1.26.11" evidence="1"/>
<dbReference type="EMBL" id="CP000867">
    <property type="protein sequence ID" value="ABX02560.1"/>
    <property type="molecule type" value="Genomic_DNA"/>
</dbReference>
<dbReference type="SMR" id="A9AB37"/>
<dbReference type="STRING" id="444158.MmarC6_1749"/>
<dbReference type="KEGG" id="mmx:MmarC6_1749"/>
<dbReference type="eggNOG" id="arCOG00501">
    <property type="taxonomic scope" value="Archaea"/>
</dbReference>
<dbReference type="HOGENOM" id="CLU_031317_2_1_2"/>
<dbReference type="OrthoDB" id="85118at2157"/>
<dbReference type="PhylomeDB" id="A9AB37"/>
<dbReference type="GO" id="GO:0042781">
    <property type="term" value="F:3'-tRNA processing endoribonuclease activity"/>
    <property type="evidence" value="ECO:0007669"/>
    <property type="project" value="UniProtKB-UniRule"/>
</dbReference>
<dbReference type="GO" id="GO:0008270">
    <property type="term" value="F:zinc ion binding"/>
    <property type="evidence" value="ECO:0007669"/>
    <property type="project" value="UniProtKB-UniRule"/>
</dbReference>
<dbReference type="CDD" id="cd07717">
    <property type="entry name" value="RNaseZ_ZiPD-like_MBL-fold"/>
    <property type="match status" value="1"/>
</dbReference>
<dbReference type="Gene3D" id="3.60.15.10">
    <property type="entry name" value="Ribonuclease Z/Hydroxyacylglutathione hydrolase-like"/>
    <property type="match status" value="1"/>
</dbReference>
<dbReference type="HAMAP" id="MF_01818">
    <property type="entry name" value="RNase_Z_BN"/>
    <property type="match status" value="1"/>
</dbReference>
<dbReference type="InterPro" id="IPR001279">
    <property type="entry name" value="Metallo-B-lactamas"/>
</dbReference>
<dbReference type="InterPro" id="IPR036866">
    <property type="entry name" value="RibonucZ/Hydroxyglut_hydro"/>
</dbReference>
<dbReference type="InterPro" id="IPR013471">
    <property type="entry name" value="RNase_Z/BN"/>
</dbReference>
<dbReference type="NCBIfam" id="NF000801">
    <property type="entry name" value="PRK00055.1-3"/>
    <property type="match status" value="1"/>
</dbReference>
<dbReference type="NCBIfam" id="TIGR02651">
    <property type="entry name" value="RNase_Z"/>
    <property type="match status" value="1"/>
</dbReference>
<dbReference type="PANTHER" id="PTHR46018">
    <property type="entry name" value="ZINC PHOSPHODIESTERASE ELAC PROTEIN 1"/>
    <property type="match status" value="1"/>
</dbReference>
<dbReference type="PANTHER" id="PTHR46018:SF2">
    <property type="entry name" value="ZINC PHOSPHODIESTERASE ELAC PROTEIN 1"/>
    <property type="match status" value="1"/>
</dbReference>
<dbReference type="Pfam" id="PF00753">
    <property type="entry name" value="Lactamase_B"/>
    <property type="match status" value="1"/>
</dbReference>
<dbReference type="SUPFAM" id="SSF56281">
    <property type="entry name" value="Metallo-hydrolase/oxidoreductase"/>
    <property type="match status" value="1"/>
</dbReference>
<sequence length="308" mass="34553">MKLTFLGTGAAIPTKYRAHPSISLKFDGEIFLFDCGENTQRQIIFTDVSPMKINNIFISHLHGDHILGLPGLLQSVAFQGRTKPLNIYGPEETAKMLENILNVGYHSIDYPINVYEISSKTPEKIISTDNYEVYSFPVVHSVPALAYVFRQVKKPRMDLEKVNKLGIEIGPDLKRLKDGFSVELNGKIITLEDVTLPPKKGICVGYSGDTIPLNEFAEFLRELKCTTLIHEATFDKTMDKNAKETLHSTVHDALNIAKLSGVNTVILTHISARYDELSAFENDIVEFKAENPDLHVLIAEDLMEYSLK</sequence>